<accession>P0DTZ0</accession>
<organism>
    <name type="scientific">Californiconus californicus</name>
    <name type="common">California cone</name>
    <name type="synonym">Conus californicus</name>
    <dbReference type="NCBI Taxonomy" id="1736779"/>
    <lineage>
        <taxon>Eukaryota</taxon>
        <taxon>Metazoa</taxon>
        <taxon>Spiralia</taxon>
        <taxon>Lophotrochozoa</taxon>
        <taxon>Mollusca</taxon>
        <taxon>Gastropoda</taxon>
        <taxon>Caenogastropoda</taxon>
        <taxon>Neogastropoda</taxon>
        <taxon>Conoidea</taxon>
        <taxon>Conidae</taxon>
        <taxon>Californiconus</taxon>
    </lineage>
</organism>
<sequence length="63" mass="6878">MKLTCVLIVAVLILTACQVIAADEATNRATKRGCLMCWGSNVRCCEKANACVSINYECPKARR</sequence>
<name>O1628_CONCL</name>
<dbReference type="SMR" id="P0DTZ0"/>
<dbReference type="GO" id="GO:0005576">
    <property type="term" value="C:extracellular region"/>
    <property type="evidence" value="ECO:0007669"/>
    <property type="project" value="UniProtKB-SubCell"/>
</dbReference>
<dbReference type="GO" id="GO:0090729">
    <property type="term" value="F:toxin activity"/>
    <property type="evidence" value="ECO:0007669"/>
    <property type="project" value="UniProtKB-KW"/>
</dbReference>
<reference key="1">
    <citation type="journal article" date="2019" name="Toxins">
        <title>The diversified O-superfamily in Californiconus californicus presents a conotoxin with antimycobacterial activity.</title>
        <authorList>
            <person name="Bernaldez-Sarabia J."/>
            <person name="Figueroa-Montiel A."/>
            <person name="Duenas S."/>
            <person name="Cervantes-Luevano K."/>
            <person name="Beltran J.A."/>
            <person name="Ortiz E."/>
            <person name="Jimenez S."/>
            <person name="Possani L.D."/>
            <person name="Paniagua-Solis J.F."/>
            <person name="Gonzalez-Canudas J."/>
            <person name="Licea-Navarro A."/>
        </authorList>
    </citation>
    <scope>NUCLEOTIDE SEQUENCE [MRNA]</scope>
    <source>
        <tissue>Venom duct</tissue>
    </source>
</reference>
<comment type="function">
    <text evidence="3">Probable neurotoxin.</text>
</comment>
<comment type="subcellular location">
    <subcellularLocation>
        <location evidence="4">Secreted</location>
    </subcellularLocation>
</comment>
<comment type="tissue specificity">
    <text evidence="4">Expressed by the venom duct.</text>
</comment>
<comment type="domain">
    <text evidence="3">The cysteine framework is VI/VII (C-C-CC-C-C).</text>
</comment>
<comment type="domain">
    <text evidence="3">The presence of a 'disulfide through disulfide knot' structurally defines this protein as a knottin.</text>
</comment>
<comment type="similarity">
    <text evidence="3">Belongs to the conotoxin O1 superfamily.</text>
</comment>
<feature type="signal peptide" evidence="1">
    <location>
        <begin position="1"/>
        <end position="22"/>
    </location>
</feature>
<feature type="chain" id="PRO_0000450972" description="Conotoxin Cal6.28" evidence="3">
    <location>
        <begin position="23"/>
        <end position="63"/>
    </location>
</feature>
<feature type="disulfide bond" evidence="3">
    <location>
        <begin position="34"/>
        <end position="45"/>
    </location>
</feature>
<feature type="disulfide bond" evidence="3">
    <location>
        <begin position="37"/>
        <end position="51"/>
    </location>
</feature>
<feature type="disulfide bond" evidence="3">
    <location>
        <begin position="44"/>
        <end position="58"/>
    </location>
</feature>
<protein>
    <recommendedName>
        <fullName evidence="3">Conotoxin Cal6.28</fullName>
    </recommendedName>
    <alternativeName>
        <fullName evidence="2">O1_cal6.28</fullName>
    </alternativeName>
</protein>
<proteinExistence type="inferred from homology"/>
<keyword id="KW-1015">Disulfide bond</keyword>
<keyword id="KW-0960">Knottin</keyword>
<keyword id="KW-0528">Neurotoxin</keyword>
<keyword id="KW-0964">Secreted</keyword>
<keyword id="KW-0732">Signal</keyword>
<keyword id="KW-0800">Toxin</keyword>
<evidence type="ECO:0000255" key="1"/>
<evidence type="ECO:0000303" key="2">
    <source>
    </source>
</evidence>
<evidence type="ECO:0000305" key="3"/>
<evidence type="ECO:0000305" key="4">
    <source>
    </source>
</evidence>